<reference key="1">
    <citation type="journal article" date="2003" name="Proc. Natl. Acad. Sci. U.S.A.">
        <title>Complete genome sequence of the marine planctomycete Pirellula sp. strain 1.</title>
        <authorList>
            <person name="Gloeckner F.O."/>
            <person name="Kube M."/>
            <person name="Bauer M."/>
            <person name="Teeling H."/>
            <person name="Lombardot T."/>
            <person name="Ludwig W."/>
            <person name="Gade D."/>
            <person name="Beck A."/>
            <person name="Borzym K."/>
            <person name="Heitmann K."/>
            <person name="Rabus R."/>
            <person name="Schlesner H."/>
            <person name="Amann R."/>
            <person name="Reinhardt R."/>
        </authorList>
    </citation>
    <scope>NUCLEOTIDE SEQUENCE [LARGE SCALE GENOMIC DNA]</scope>
    <source>
        <strain>DSM 10527 / NCIMB 13988 / SH1</strain>
    </source>
</reference>
<accession>Q7UFW4</accession>
<gene>
    <name evidence="1" type="primary">argG</name>
    <name type="ordered locus">RB8293</name>
</gene>
<sequence>MKSCVLAYSGGLDTSVILGWLQDQGYEVHCVYVDLGQPCEDRDAIMEKARTCGAKSSRLVDVREELCRDFAFPVLAWQAKYEQIYLLGTSIARPLISKVCLEVAREVGATAYAHGATGKGNDQCRFQLAAEALDPNIEMIAPWRIKSFRDAFPGRTELIEYCDVKRIPVKASTAKPYSSDENVLHISYEAGKLEELDVNGVELVEFGMGVSPQDAPDKPEEVTIGFESGVPKTLNGKAVNALEMVEQLNDIAGRNGVGRIDMVENRFVGMKSRGVYESPGMTVLYDALMYVEQLTMDRDLMHLRDRMAPEVAEMVYYGFWYTPKMDALMSFIETAQRPVTGEVTLQLYKGNIMVSSRTSPNSLYDEEIATMEGGGSYNQDDAEGFLRIQGLPSRVQGRVSPRKF</sequence>
<evidence type="ECO:0000255" key="1">
    <source>
        <dbReference type="HAMAP-Rule" id="MF_00005"/>
    </source>
</evidence>
<evidence type="ECO:0000305" key="2"/>
<dbReference type="EC" id="6.3.4.5" evidence="1"/>
<dbReference type="EMBL" id="BX294147">
    <property type="protein sequence ID" value="CAD78565.1"/>
    <property type="status" value="ALT_INIT"/>
    <property type="molecule type" value="Genomic_DNA"/>
</dbReference>
<dbReference type="RefSeq" id="NP_868287.1">
    <property type="nucleotide sequence ID" value="NC_005027.1"/>
</dbReference>
<dbReference type="RefSeq" id="WP_007326489.1">
    <property type="nucleotide sequence ID" value="NC_005027.1"/>
</dbReference>
<dbReference type="SMR" id="Q7UFW4"/>
<dbReference type="FunCoup" id="Q7UFW4">
    <property type="interactions" value="481"/>
</dbReference>
<dbReference type="STRING" id="243090.RB8293"/>
<dbReference type="EnsemblBacteria" id="CAD78565">
    <property type="protein sequence ID" value="CAD78565"/>
    <property type="gene ID" value="RB8293"/>
</dbReference>
<dbReference type="KEGG" id="rba:RB8293"/>
<dbReference type="PATRIC" id="fig|243090.15.peg.3998"/>
<dbReference type="eggNOG" id="COG0137">
    <property type="taxonomic scope" value="Bacteria"/>
</dbReference>
<dbReference type="HOGENOM" id="CLU_032784_4_2_0"/>
<dbReference type="InParanoid" id="Q7UFW4"/>
<dbReference type="OrthoDB" id="9801641at2"/>
<dbReference type="UniPathway" id="UPA00068">
    <property type="reaction ID" value="UER00113"/>
</dbReference>
<dbReference type="Proteomes" id="UP000001025">
    <property type="component" value="Chromosome"/>
</dbReference>
<dbReference type="GO" id="GO:0005737">
    <property type="term" value="C:cytoplasm"/>
    <property type="evidence" value="ECO:0000318"/>
    <property type="project" value="GO_Central"/>
</dbReference>
<dbReference type="GO" id="GO:0004055">
    <property type="term" value="F:argininosuccinate synthase activity"/>
    <property type="evidence" value="ECO:0000318"/>
    <property type="project" value="GO_Central"/>
</dbReference>
<dbReference type="GO" id="GO:0005524">
    <property type="term" value="F:ATP binding"/>
    <property type="evidence" value="ECO:0007669"/>
    <property type="project" value="UniProtKB-UniRule"/>
</dbReference>
<dbReference type="GO" id="GO:0000053">
    <property type="term" value="P:argininosuccinate metabolic process"/>
    <property type="evidence" value="ECO:0000318"/>
    <property type="project" value="GO_Central"/>
</dbReference>
<dbReference type="GO" id="GO:0006526">
    <property type="term" value="P:L-arginine biosynthetic process"/>
    <property type="evidence" value="ECO:0000318"/>
    <property type="project" value="GO_Central"/>
</dbReference>
<dbReference type="GO" id="GO:0000050">
    <property type="term" value="P:urea cycle"/>
    <property type="evidence" value="ECO:0000318"/>
    <property type="project" value="GO_Central"/>
</dbReference>
<dbReference type="CDD" id="cd01999">
    <property type="entry name" value="ASS"/>
    <property type="match status" value="1"/>
</dbReference>
<dbReference type="FunFam" id="3.40.50.620:FF:000019">
    <property type="entry name" value="Argininosuccinate synthase"/>
    <property type="match status" value="1"/>
</dbReference>
<dbReference type="FunFam" id="3.90.1260.10:FF:000007">
    <property type="entry name" value="Argininosuccinate synthase"/>
    <property type="match status" value="1"/>
</dbReference>
<dbReference type="Gene3D" id="3.90.1260.10">
    <property type="entry name" value="Argininosuccinate synthetase, chain A, domain 2"/>
    <property type="match status" value="1"/>
</dbReference>
<dbReference type="Gene3D" id="3.40.50.620">
    <property type="entry name" value="HUPs"/>
    <property type="match status" value="1"/>
</dbReference>
<dbReference type="HAMAP" id="MF_00005">
    <property type="entry name" value="Arg_succ_synth_type1"/>
    <property type="match status" value="1"/>
</dbReference>
<dbReference type="InterPro" id="IPR048268">
    <property type="entry name" value="Arginosuc_syn_C"/>
</dbReference>
<dbReference type="InterPro" id="IPR048267">
    <property type="entry name" value="Arginosuc_syn_N"/>
</dbReference>
<dbReference type="InterPro" id="IPR001518">
    <property type="entry name" value="Arginosuc_synth"/>
</dbReference>
<dbReference type="InterPro" id="IPR018223">
    <property type="entry name" value="Arginosuc_synth_CS"/>
</dbReference>
<dbReference type="InterPro" id="IPR023434">
    <property type="entry name" value="Arginosuc_synth_type_1_subfam"/>
</dbReference>
<dbReference type="InterPro" id="IPR024074">
    <property type="entry name" value="AS_cat/multimer_dom_body"/>
</dbReference>
<dbReference type="InterPro" id="IPR014729">
    <property type="entry name" value="Rossmann-like_a/b/a_fold"/>
</dbReference>
<dbReference type="NCBIfam" id="TIGR00032">
    <property type="entry name" value="argG"/>
    <property type="match status" value="1"/>
</dbReference>
<dbReference type="NCBIfam" id="NF001770">
    <property type="entry name" value="PRK00509.1"/>
    <property type="match status" value="1"/>
</dbReference>
<dbReference type="PANTHER" id="PTHR11587">
    <property type="entry name" value="ARGININOSUCCINATE SYNTHASE"/>
    <property type="match status" value="1"/>
</dbReference>
<dbReference type="PANTHER" id="PTHR11587:SF2">
    <property type="entry name" value="ARGININOSUCCINATE SYNTHASE"/>
    <property type="match status" value="1"/>
</dbReference>
<dbReference type="Pfam" id="PF20979">
    <property type="entry name" value="Arginosuc_syn_C"/>
    <property type="match status" value="1"/>
</dbReference>
<dbReference type="Pfam" id="PF00764">
    <property type="entry name" value="Arginosuc_synth"/>
    <property type="match status" value="1"/>
</dbReference>
<dbReference type="SUPFAM" id="SSF52402">
    <property type="entry name" value="Adenine nucleotide alpha hydrolases-like"/>
    <property type="match status" value="1"/>
</dbReference>
<dbReference type="SUPFAM" id="SSF69864">
    <property type="entry name" value="Argininosuccinate synthetase, C-terminal domain"/>
    <property type="match status" value="1"/>
</dbReference>
<dbReference type="PROSITE" id="PS00564">
    <property type="entry name" value="ARGININOSUCCIN_SYN_1"/>
    <property type="match status" value="1"/>
</dbReference>
<dbReference type="PROSITE" id="PS00565">
    <property type="entry name" value="ARGININOSUCCIN_SYN_2"/>
    <property type="match status" value="1"/>
</dbReference>
<comment type="catalytic activity">
    <reaction evidence="1">
        <text>L-citrulline + L-aspartate + ATP = 2-(N(omega)-L-arginino)succinate + AMP + diphosphate + H(+)</text>
        <dbReference type="Rhea" id="RHEA:10932"/>
        <dbReference type="ChEBI" id="CHEBI:15378"/>
        <dbReference type="ChEBI" id="CHEBI:29991"/>
        <dbReference type="ChEBI" id="CHEBI:30616"/>
        <dbReference type="ChEBI" id="CHEBI:33019"/>
        <dbReference type="ChEBI" id="CHEBI:57472"/>
        <dbReference type="ChEBI" id="CHEBI:57743"/>
        <dbReference type="ChEBI" id="CHEBI:456215"/>
        <dbReference type="EC" id="6.3.4.5"/>
    </reaction>
</comment>
<comment type="pathway">
    <text evidence="1">Amino-acid biosynthesis; L-arginine biosynthesis; L-arginine from L-ornithine and carbamoyl phosphate: step 2/3.</text>
</comment>
<comment type="subunit">
    <text evidence="1">Homotetramer.</text>
</comment>
<comment type="subcellular location">
    <subcellularLocation>
        <location evidence="1">Cytoplasm</location>
    </subcellularLocation>
</comment>
<comment type="similarity">
    <text evidence="1">Belongs to the argininosuccinate synthase family. Type 1 subfamily.</text>
</comment>
<comment type="sequence caution" evidence="2">
    <conflict type="erroneous initiation">
        <sequence resource="EMBL-CDS" id="CAD78565"/>
    </conflict>
</comment>
<proteinExistence type="inferred from homology"/>
<name>ASSY_RHOBA</name>
<feature type="chain" id="PRO_0000148631" description="Argininosuccinate synthase">
    <location>
        <begin position="1"/>
        <end position="404"/>
    </location>
</feature>
<feature type="binding site" evidence="1">
    <location>
        <begin position="7"/>
        <end position="15"/>
    </location>
    <ligand>
        <name>ATP</name>
        <dbReference type="ChEBI" id="CHEBI:30616"/>
    </ligand>
</feature>
<feature type="binding site" evidence="1">
    <location>
        <position position="85"/>
    </location>
    <ligand>
        <name>L-citrulline</name>
        <dbReference type="ChEBI" id="CHEBI:57743"/>
    </ligand>
</feature>
<feature type="binding site" evidence="1">
    <location>
        <position position="90"/>
    </location>
    <ligand>
        <name>L-citrulline</name>
        <dbReference type="ChEBI" id="CHEBI:57743"/>
    </ligand>
</feature>
<feature type="binding site" evidence="1">
    <location>
        <position position="115"/>
    </location>
    <ligand>
        <name>ATP</name>
        <dbReference type="ChEBI" id="CHEBI:30616"/>
    </ligand>
</feature>
<feature type="binding site" evidence="1">
    <location>
        <position position="117"/>
    </location>
    <ligand>
        <name>L-aspartate</name>
        <dbReference type="ChEBI" id="CHEBI:29991"/>
    </ligand>
</feature>
<feature type="binding site" evidence="1">
    <location>
        <position position="121"/>
    </location>
    <ligand>
        <name>L-aspartate</name>
        <dbReference type="ChEBI" id="CHEBI:29991"/>
    </ligand>
</feature>
<feature type="binding site" evidence="1">
    <location>
        <position position="121"/>
    </location>
    <ligand>
        <name>L-citrulline</name>
        <dbReference type="ChEBI" id="CHEBI:57743"/>
    </ligand>
</feature>
<feature type="binding site" evidence="1">
    <location>
        <position position="122"/>
    </location>
    <ligand>
        <name>L-aspartate</name>
        <dbReference type="ChEBI" id="CHEBI:29991"/>
    </ligand>
</feature>
<feature type="binding site" evidence="1">
    <location>
        <position position="125"/>
    </location>
    <ligand>
        <name>L-citrulline</name>
        <dbReference type="ChEBI" id="CHEBI:57743"/>
    </ligand>
</feature>
<feature type="binding site" evidence="1">
    <location>
        <position position="178"/>
    </location>
    <ligand>
        <name>L-citrulline</name>
        <dbReference type="ChEBI" id="CHEBI:57743"/>
    </ligand>
</feature>
<feature type="binding site" evidence="1">
    <location>
        <position position="187"/>
    </location>
    <ligand>
        <name>L-citrulline</name>
        <dbReference type="ChEBI" id="CHEBI:57743"/>
    </ligand>
</feature>
<feature type="binding site" evidence="1">
    <location>
        <position position="264"/>
    </location>
    <ligand>
        <name>L-citrulline</name>
        <dbReference type="ChEBI" id="CHEBI:57743"/>
    </ligand>
</feature>
<feature type="binding site" evidence="1">
    <location>
        <position position="276"/>
    </location>
    <ligand>
        <name>L-citrulline</name>
        <dbReference type="ChEBI" id="CHEBI:57743"/>
    </ligand>
</feature>
<protein>
    <recommendedName>
        <fullName evidence="1">Argininosuccinate synthase</fullName>
        <ecNumber evidence="1">6.3.4.5</ecNumber>
    </recommendedName>
    <alternativeName>
        <fullName evidence="1">Citrulline--aspartate ligase</fullName>
    </alternativeName>
</protein>
<organism>
    <name type="scientific">Rhodopirellula baltica (strain DSM 10527 / NCIMB 13988 / SH1)</name>
    <dbReference type="NCBI Taxonomy" id="243090"/>
    <lineage>
        <taxon>Bacteria</taxon>
        <taxon>Pseudomonadati</taxon>
        <taxon>Planctomycetota</taxon>
        <taxon>Planctomycetia</taxon>
        <taxon>Pirellulales</taxon>
        <taxon>Pirellulaceae</taxon>
        <taxon>Rhodopirellula</taxon>
    </lineage>
</organism>
<keyword id="KW-0028">Amino-acid biosynthesis</keyword>
<keyword id="KW-0055">Arginine biosynthesis</keyword>
<keyword id="KW-0067">ATP-binding</keyword>
<keyword id="KW-0963">Cytoplasm</keyword>
<keyword id="KW-0436">Ligase</keyword>
<keyword id="KW-0547">Nucleotide-binding</keyword>
<keyword id="KW-1185">Reference proteome</keyword>